<protein>
    <recommendedName>
        <fullName evidence="1">SsrA-binding protein</fullName>
    </recommendedName>
    <alternativeName>
        <fullName evidence="1">Small protein B</fullName>
    </alternativeName>
</protein>
<proteinExistence type="inferred from homology"/>
<dbReference type="EMBL" id="CP000304">
    <property type="protein sequence ID" value="ABP80963.1"/>
    <property type="molecule type" value="Genomic_DNA"/>
</dbReference>
<dbReference type="RefSeq" id="WP_011914394.1">
    <property type="nucleotide sequence ID" value="NC_009434.1"/>
</dbReference>
<dbReference type="SMR" id="A4VPR2"/>
<dbReference type="GeneID" id="66822731"/>
<dbReference type="KEGG" id="psa:PST_3334"/>
<dbReference type="eggNOG" id="COG0691">
    <property type="taxonomic scope" value="Bacteria"/>
</dbReference>
<dbReference type="HOGENOM" id="CLU_108953_3_0_6"/>
<dbReference type="Proteomes" id="UP000000233">
    <property type="component" value="Chromosome"/>
</dbReference>
<dbReference type="GO" id="GO:0005829">
    <property type="term" value="C:cytosol"/>
    <property type="evidence" value="ECO:0007669"/>
    <property type="project" value="TreeGrafter"/>
</dbReference>
<dbReference type="GO" id="GO:0003723">
    <property type="term" value="F:RNA binding"/>
    <property type="evidence" value="ECO:0007669"/>
    <property type="project" value="UniProtKB-UniRule"/>
</dbReference>
<dbReference type="GO" id="GO:0070929">
    <property type="term" value="P:trans-translation"/>
    <property type="evidence" value="ECO:0007669"/>
    <property type="project" value="UniProtKB-UniRule"/>
</dbReference>
<dbReference type="CDD" id="cd09294">
    <property type="entry name" value="SmpB"/>
    <property type="match status" value="1"/>
</dbReference>
<dbReference type="Gene3D" id="2.40.280.10">
    <property type="match status" value="1"/>
</dbReference>
<dbReference type="HAMAP" id="MF_00023">
    <property type="entry name" value="SmpB"/>
    <property type="match status" value="1"/>
</dbReference>
<dbReference type="InterPro" id="IPR023620">
    <property type="entry name" value="SmpB"/>
</dbReference>
<dbReference type="InterPro" id="IPR000037">
    <property type="entry name" value="SsrA-bd_prot"/>
</dbReference>
<dbReference type="InterPro" id="IPR020081">
    <property type="entry name" value="SsrA-bd_prot_CS"/>
</dbReference>
<dbReference type="NCBIfam" id="NF003843">
    <property type="entry name" value="PRK05422.1"/>
    <property type="match status" value="1"/>
</dbReference>
<dbReference type="NCBIfam" id="TIGR00086">
    <property type="entry name" value="smpB"/>
    <property type="match status" value="1"/>
</dbReference>
<dbReference type="PANTHER" id="PTHR30308:SF2">
    <property type="entry name" value="SSRA-BINDING PROTEIN"/>
    <property type="match status" value="1"/>
</dbReference>
<dbReference type="PANTHER" id="PTHR30308">
    <property type="entry name" value="TMRNA-BINDING COMPONENT OF TRANS-TRANSLATION TAGGING COMPLEX"/>
    <property type="match status" value="1"/>
</dbReference>
<dbReference type="Pfam" id="PF01668">
    <property type="entry name" value="SmpB"/>
    <property type="match status" value="1"/>
</dbReference>
<dbReference type="SUPFAM" id="SSF74982">
    <property type="entry name" value="Small protein B (SmpB)"/>
    <property type="match status" value="1"/>
</dbReference>
<dbReference type="PROSITE" id="PS01317">
    <property type="entry name" value="SSRP"/>
    <property type="match status" value="1"/>
</dbReference>
<keyword id="KW-0963">Cytoplasm</keyword>
<keyword id="KW-1185">Reference proteome</keyword>
<keyword id="KW-0694">RNA-binding</keyword>
<gene>
    <name evidence="1" type="primary">smpB</name>
    <name type="ordered locus">PST_3334</name>
</gene>
<evidence type="ECO:0000255" key="1">
    <source>
        <dbReference type="HAMAP-Rule" id="MF_00023"/>
    </source>
</evidence>
<evidence type="ECO:0000256" key="2">
    <source>
        <dbReference type="SAM" id="MobiDB-lite"/>
    </source>
</evidence>
<feature type="chain" id="PRO_1000002117" description="SsrA-binding protein">
    <location>
        <begin position="1"/>
        <end position="160"/>
    </location>
</feature>
<feature type="region of interest" description="Disordered" evidence="2">
    <location>
        <begin position="131"/>
        <end position="160"/>
    </location>
</feature>
<sequence length="160" mass="18109">MAKQKKQSPGTIALNKKALHDYFIEQKFEAGLVLAGWEVKSLRAGKAQLVDSYVLLKDGEAWLMGAHITPLTSASTHVIADPTRTRKLLLNKRELGKLFGAVQQKGYACVALSLYWKKHMIKCEIALAKGKKEFDKRHTEKERDSDREIQRAMRTKGKDD</sequence>
<organism>
    <name type="scientific">Stutzerimonas stutzeri (strain A1501)</name>
    <name type="common">Pseudomonas stutzeri</name>
    <dbReference type="NCBI Taxonomy" id="379731"/>
    <lineage>
        <taxon>Bacteria</taxon>
        <taxon>Pseudomonadati</taxon>
        <taxon>Pseudomonadota</taxon>
        <taxon>Gammaproteobacteria</taxon>
        <taxon>Pseudomonadales</taxon>
        <taxon>Pseudomonadaceae</taxon>
        <taxon>Stutzerimonas</taxon>
    </lineage>
</organism>
<reference key="1">
    <citation type="journal article" date="2008" name="Proc. Natl. Acad. Sci. U.S.A.">
        <title>Nitrogen fixation island and rhizosphere competence traits in the genome of root-associated Pseudomonas stutzeri A1501.</title>
        <authorList>
            <person name="Yan Y."/>
            <person name="Yang J."/>
            <person name="Dou Y."/>
            <person name="Chen M."/>
            <person name="Ping S."/>
            <person name="Peng J."/>
            <person name="Lu W."/>
            <person name="Zhang W."/>
            <person name="Yao Z."/>
            <person name="Li H."/>
            <person name="Liu W."/>
            <person name="He S."/>
            <person name="Geng L."/>
            <person name="Zhang X."/>
            <person name="Yang F."/>
            <person name="Yu H."/>
            <person name="Zhan Y."/>
            <person name="Li D."/>
            <person name="Lin Z."/>
            <person name="Wang Y."/>
            <person name="Elmerich C."/>
            <person name="Lin M."/>
            <person name="Jin Q."/>
        </authorList>
    </citation>
    <scope>NUCLEOTIDE SEQUENCE [LARGE SCALE GENOMIC DNA]</scope>
    <source>
        <strain>A1501</strain>
    </source>
</reference>
<name>SSRP_STUS1</name>
<comment type="function">
    <text evidence="1">Required for rescue of stalled ribosomes mediated by trans-translation. Binds to transfer-messenger RNA (tmRNA), required for stable association of tmRNA with ribosomes. tmRNA and SmpB together mimic tRNA shape, replacing the anticodon stem-loop with SmpB. tmRNA is encoded by the ssrA gene; the 2 termini fold to resemble tRNA(Ala) and it encodes a 'tag peptide', a short internal open reading frame. During trans-translation Ala-aminoacylated tmRNA acts like a tRNA, entering the A-site of stalled ribosomes, displacing the stalled mRNA. The ribosome then switches to translate the ORF on the tmRNA; the nascent peptide is terminated with the 'tag peptide' encoded by the tmRNA and targeted for degradation. The ribosome is freed to recommence translation, which seems to be the essential function of trans-translation.</text>
</comment>
<comment type="subcellular location">
    <subcellularLocation>
        <location evidence="1">Cytoplasm</location>
    </subcellularLocation>
    <text evidence="1">The tmRNA-SmpB complex associates with stalled 70S ribosomes.</text>
</comment>
<comment type="similarity">
    <text evidence="1">Belongs to the SmpB family.</text>
</comment>
<accession>A4VPR2</accession>